<organism>
    <name type="scientific">Influenza A virus (strain A/Fort Warren/1/1950 H1N1)</name>
    <dbReference type="NCBI Taxonomy" id="384525"/>
    <lineage>
        <taxon>Viruses</taxon>
        <taxon>Riboviria</taxon>
        <taxon>Orthornavirae</taxon>
        <taxon>Negarnaviricota</taxon>
        <taxon>Polyploviricotina</taxon>
        <taxon>Insthoviricetes</taxon>
        <taxon>Articulavirales</taxon>
        <taxon>Orthomyxoviridae</taxon>
        <taxon>Alphainfluenzavirus</taxon>
        <taxon>Alphainfluenzavirus influenzae</taxon>
        <taxon>Influenza A virus</taxon>
    </lineage>
</organism>
<sequence>MSLLTEVETYVLSIVPSGPLKAEIAQRLEDVFAGKNTDLEALMEWLKTRPILSPLTKGILGFVFTLTVPSERGLQRRRFVQNALNGNGDPNNMDRAVKLYRKLKREITFHGAKEIALSYSAGALASCMGLIYNRMGAVTTEVAFGLVCATCEQIADSQHRSHRQMVTTTNPLIRHENRMVLASTTAKAMEQMAGSSEQAAEAMEVASQARQMVQAMRAIGTHPRSSAGLKDDLLENLQAYQKRMGVQMQRFK</sequence>
<gene>
    <name evidence="1" type="primary">M</name>
</gene>
<feature type="chain" id="PRO_0000078854" description="Matrix protein 1">
    <location>
        <begin position="1"/>
        <end position="252"/>
    </location>
</feature>
<feature type="region of interest" description="Membrane-binding" evidence="1">
    <location>
        <begin position="1"/>
        <end position="164"/>
    </location>
</feature>
<feature type="region of interest" description="RNP-binding" evidence="1">
    <location>
        <begin position="165"/>
        <end position="252"/>
    </location>
</feature>
<feature type="short sequence motif" description="Nuclear localization signal" evidence="1">
    <location>
        <begin position="101"/>
        <end position="105"/>
    </location>
</feature>
<name>M1_I50A0</name>
<keyword id="KW-0025">Alternative splicing</keyword>
<keyword id="KW-1048">Host nucleus</keyword>
<keyword id="KW-0472">Membrane</keyword>
<keyword id="KW-0694">RNA-binding</keyword>
<keyword id="KW-0468">Viral matrix protein</keyword>
<keyword id="KW-0946">Virion</keyword>
<proteinExistence type="inferred from homology"/>
<dbReference type="EMBL" id="X08091">
    <property type="protein sequence ID" value="CAA30888.1"/>
    <property type="molecule type" value="Genomic_RNA"/>
</dbReference>
<dbReference type="PIR" id="S14616">
    <property type="entry name" value="S14616"/>
</dbReference>
<dbReference type="SMR" id="P69275"/>
<dbReference type="GO" id="GO:0042025">
    <property type="term" value="C:host cell nucleus"/>
    <property type="evidence" value="ECO:0007669"/>
    <property type="project" value="UniProtKB-SubCell"/>
</dbReference>
<dbReference type="GO" id="GO:0016020">
    <property type="term" value="C:membrane"/>
    <property type="evidence" value="ECO:0007669"/>
    <property type="project" value="UniProtKB-KW"/>
</dbReference>
<dbReference type="GO" id="GO:0055036">
    <property type="term" value="C:virion membrane"/>
    <property type="evidence" value="ECO:0007669"/>
    <property type="project" value="UniProtKB-SubCell"/>
</dbReference>
<dbReference type="GO" id="GO:0003723">
    <property type="term" value="F:RNA binding"/>
    <property type="evidence" value="ECO:0007669"/>
    <property type="project" value="UniProtKB-UniRule"/>
</dbReference>
<dbReference type="GO" id="GO:0039660">
    <property type="term" value="F:structural constituent of virion"/>
    <property type="evidence" value="ECO:0007669"/>
    <property type="project" value="UniProtKB-UniRule"/>
</dbReference>
<dbReference type="GO" id="GO:0046761">
    <property type="term" value="P:viral budding from plasma membrane"/>
    <property type="evidence" value="ECO:0007669"/>
    <property type="project" value="UniProtKB-UniRule"/>
</dbReference>
<dbReference type="FunFam" id="1.10.10.180:FF:000001">
    <property type="entry name" value="Matrix protein 1"/>
    <property type="match status" value="1"/>
</dbReference>
<dbReference type="FunFam" id="1.20.91.10:FF:000001">
    <property type="entry name" value="Matrix protein 1"/>
    <property type="match status" value="1"/>
</dbReference>
<dbReference type="Gene3D" id="1.10.10.180">
    <property type="match status" value="1"/>
</dbReference>
<dbReference type="Gene3D" id="1.20.91.10">
    <property type="match status" value="1"/>
</dbReference>
<dbReference type="HAMAP" id="MF_04068">
    <property type="entry name" value="INFV_M1"/>
    <property type="match status" value="1"/>
</dbReference>
<dbReference type="InterPro" id="IPR036039">
    <property type="entry name" value="Flu_matrix_M1"/>
</dbReference>
<dbReference type="InterPro" id="IPR013188">
    <property type="entry name" value="Flu_matrix_M1_C"/>
</dbReference>
<dbReference type="InterPro" id="IPR001561">
    <property type="entry name" value="Flu_matrix_M1_N"/>
</dbReference>
<dbReference type="InterPro" id="IPR015423">
    <property type="entry name" value="Flu_matrix_M1_N_sub1"/>
</dbReference>
<dbReference type="InterPro" id="IPR015799">
    <property type="entry name" value="Flu_matrix_M1_N_sub2"/>
</dbReference>
<dbReference type="InterPro" id="IPR037533">
    <property type="entry name" value="INFV_M1"/>
</dbReference>
<dbReference type="Pfam" id="PF00598">
    <property type="entry name" value="Flu_M1"/>
    <property type="match status" value="1"/>
</dbReference>
<dbReference type="Pfam" id="PF08289">
    <property type="entry name" value="Flu_M1_C"/>
    <property type="match status" value="1"/>
</dbReference>
<dbReference type="SMART" id="SM00759">
    <property type="entry name" value="Flu_M1_C"/>
    <property type="match status" value="1"/>
</dbReference>
<dbReference type="SUPFAM" id="SSF48145">
    <property type="entry name" value="Influenza virus matrix protein M1"/>
    <property type="match status" value="1"/>
</dbReference>
<comment type="function">
    <text evidence="1">Plays critical roles in virus replication, from virus entry and uncoating to assembly and budding of the virus particle. M1 binding to ribonucleocapsids (RNPs) in nucleus seems to inhibit viral transcription. Interaction of viral NEP with M1-RNP is thought to promote nuclear export of the complex, which is targeted to the virion assembly site at the apical plasma membrane in polarized epithelial cells. Interactions with NA and HA may bring M1, a non-raft-associated protein, into lipid rafts. Forms a continuous shell on the inner side of the lipid bilayer in virion, where it binds the RNP. During virus entry into cell, the M2 ion channel acidifies the internal virion core, inducing M1 dissociation from the RNP. M1-free RNPs are transported to the nucleus, where viral transcription and replication can take place.</text>
</comment>
<comment type="function">
    <text evidence="1">Determines the virion's shape: spherical or filamentous. Clinical isolates of influenza are characterized by the presence of significant proportion of filamentous virions, whereas after multiple passage on eggs or cell culture, virions have only spherical morphology. Filamentous virions are thought to be important to infect neighboring cells, and spherical virions more suited to spread through aerosol between hosts organisms.</text>
</comment>
<comment type="subunit">
    <text evidence="1">Homodimer and homomultimer. Interacts with NEP. Binds ribonucleocapsid by both interacting with genomic RNA and NP protein. May interact with HA and NA. Cannot bind NP without genomic RNA.</text>
</comment>
<comment type="subcellular location">
    <subcellularLocation>
        <location evidence="1">Virion membrane</location>
        <topology evidence="1">Peripheral membrane protein</topology>
        <orientation evidence="1">Cytoplasmic side</orientation>
    </subcellularLocation>
    <subcellularLocation>
        <location evidence="1">Host nucleus</location>
    </subcellularLocation>
</comment>
<comment type="alternative products">
    <event type="alternative splicing"/>
    <isoform>
        <id>P69275-1</id>
        <name>M1</name>
        <sequence type="displayed"/>
    </isoform>
    <isoform>
        <id>P10921-1</id>
        <name>M2</name>
        <sequence type="external"/>
    </isoform>
    <text>Only the first 9 residues are shared by the 2 isoforms.</text>
</comment>
<comment type="miscellaneous">
    <text evidence="1">Most abundant protein in virion. When expressed alone can form virus-like particles in transfected cells.</text>
</comment>
<comment type="similarity">
    <text evidence="1">Belongs to the influenza viruses Matrix protein M1 family.</text>
</comment>
<protein>
    <recommendedName>
        <fullName evidence="1">Matrix protein 1</fullName>
        <shortName evidence="1">M1</shortName>
    </recommendedName>
</protein>
<accession>P69275</accession>
<accession>P10918</accession>
<reference key="1">
    <citation type="journal article" date="1989" name="Nucleic Acids Res.">
        <title>Nucleotide sequences of influenza A virus RNA segment 7: a comparison of five isolates.</title>
        <authorList>
            <person name="Zebedee S.L."/>
            <person name="Lamb R.A."/>
        </authorList>
    </citation>
    <scope>NUCLEOTIDE SEQUENCE [GENOMIC RNA]</scope>
</reference>
<evidence type="ECO:0000255" key="1">
    <source>
        <dbReference type="HAMAP-Rule" id="MF_04068"/>
    </source>
</evidence>
<organismHost>
    <name type="scientific">Aves</name>
    <dbReference type="NCBI Taxonomy" id="8782"/>
</organismHost>
<organismHost>
    <name type="scientific">Homo sapiens</name>
    <name type="common">Human</name>
    <dbReference type="NCBI Taxonomy" id="9606"/>
</organismHost>
<organismHost>
    <name type="scientific">Sus scrofa</name>
    <name type="common">Pig</name>
    <dbReference type="NCBI Taxonomy" id="9823"/>
</organismHost>